<feature type="chain" id="PRO_0000096792" description="Interleukin-33">
    <location>
        <begin position="1"/>
        <end position="270"/>
    </location>
</feature>
<feature type="propeptide" id="PRO_0000430090" evidence="2">
    <location>
        <begin position="1"/>
        <end position="94"/>
    </location>
</feature>
<feature type="region of interest" description="Homeodomain-like HTH domain" evidence="2">
    <location>
        <begin position="1"/>
        <end position="65"/>
    </location>
</feature>
<feature type="region of interest" description="Interaction with RELA" evidence="3">
    <location>
        <begin position="64"/>
        <end position="111"/>
    </location>
</feature>
<feature type="site" description="Cleavage; by CTSG and ELANE" evidence="3">
    <location>
        <begin position="104"/>
        <end position="105"/>
    </location>
</feature>
<feature type="site" description="Cleavage; by ELANE" evidence="3">
    <location>
        <begin position="111"/>
        <end position="112"/>
    </location>
</feature>
<reference key="1">
    <citation type="submission" date="2004-11" db="EMBL/GenBank/DDBJ databases">
        <authorList>
            <consortium name="The German cDNA consortium"/>
        </authorList>
    </citation>
    <scope>NUCLEOTIDE SEQUENCE [LARGE SCALE MRNA]</scope>
    <source>
        <tissue>Heart</tissue>
    </source>
</reference>
<protein>
    <recommendedName>
        <fullName>Interleukin-33</fullName>
        <shortName>IL-33</shortName>
    </recommendedName>
</protein>
<proteinExistence type="evidence at transcript level"/>
<evidence type="ECO:0000250" key="1"/>
<evidence type="ECO:0000250" key="2">
    <source>
        <dbReference type="UniProtKB" id="O95760"/>
    </source>
</evidence>
<evidence type="ECO:0000250" key="3">
    <source>
        <dbReference type="UniProtKB" id="Q8BVZ5"/>
    </source>
</evidence>
<evidence type="ECO:0000305" key="4"/>
<name>IL33_PONAB</name>
<accession>Q5RDG8</accession>
<gene>
    <name type="primary">IL33</name>
</gene>
<organism>
    <name type="scientific">Pongo abelii</name>
    <name type="common">Sumatran orangutan</name>
    <name type="synonym">Pongo pygmaeus abelii</name>
    <dbReference type="NCBI Taxonomy" id="9601"/>
    <lineage>
        <taxon>Eukaryota</taxon>
        <taxon>Metazoa</taxon>
        <taxon>Chordata</taxon>
        <taxon>Craniata</taxon>
        <taxon>Vertebrata</taxon>
        <taxon>Euteleostomi</taxon>
        <taxon>Mammalia</taxon>
        <taxon>Eutheria</taxon>
        <taxon>Euarchontoglires</taxon>
        <taxon>Primates</taxon>
        <taxon>Haplorrhini</taxon>
        <taxon>Catarrhini</taxon>
        <taxon>Hominidae</taxon>
        <taxon>Pongo</taxon>
    </lineage>
</organism>
<sequence>MKPKMKYSTNKISTAKWKNTASKALCFKLGKSQQKAKEACHVYFMKLRSGLMIKKEACYFRRETTKRPSLKTDRKHKRHLVLAACQQQSTVESFAFGISGVQKYTRALHDSSITGISPITEYLASLSTYNDQSVTFALEDESYEIYVEDLKKDEKKDKVLLSYYESQRPSSESGDGVDGKMLMVTLSPTKDFWLHANNKEHSVELHKCEKPLADQAFFVLHNRPSNCVSFECKTDPGVFIGVKDNHLALIEVDSSENLGTENILFKLSET</sequence>
<comment type="function">
    <text evidence="2 3">Cytokine that binds to and signals through the IL1RL1/ST2 receptor which in turn activates NF-kappa-B and MAPK signaling pathways in target cells. Involved in the maturation of Th2 cells inducing the secretion of T-helper type 2-associated cytokines. Also involved in activation of mast cells, basophils, eosinophils and natural killer cells. Acts as a chemoattractant for Th2 cells, and may function as an 'alarmin', that amplifies immune responses during tissue injury (By similarity). Induces rapid UCP2-dependent mitochondrial rewiring that attenuates the generation of reactive oxygen species and preserves the integrity of Krebs cycle required for persistent production of itaconate and subsequent GATA3-dependent differentiation of inflammation-resolving alternatively activated macrophages (By similarity).</text>
</comment>
<comment type="function">
    <text evidence="1">In quiescent endothelia the uncleaved form is constitutively and abundantly expressed, and acts as a chromatin-associated nuclear factor with transcriptional repressor properties, it may sequester nuclear NF-kappaB/RELA, lowering expression of its targets. This form is rapidely lost upon angiogenic or pro-inflammatory activation (By similarity).</text>
</comment>
<comment type="subunit">
    <text evidence="2">Forms a 1:1:1 heterotrimeric complex with its primary high-affinity receptor IL1RL1 and the coreceptor IL1RAP. Interacts with cargo receptor TMED10; the interaction mediates the translocation from the cytoplasm into the ERGIC (endoplasmic reticulum-Golgi intermediate compartment) and thereby secretion.</text>
</comment>
<comment type="subcellular location">
    <subcellularLocation>
        <location evidence="2">Nucleus</location>
    </subcellularLocation>
    <subcellularLocation>
        <location evidence="2">Chromosome</location>
    </subcellularLocation>
    <subcellularLocation>
        <location evidence="2">Cytoplasm</location>
    </subcellularLocation>
    <subcellularLocation>
        <location evidence="2">Cytoplasmic vesicle</location>
        <location evidence="2">Secretory vesicle</location>
    </subcellularLocation>
    <subcellularLocation>
        <location evidence="2">Secreted</location>
    </subcellularLocation>
    <text evidence="2">Associates with heterochromatin and mitotic chromosomes. The secretion is dependent on protein unfolding and facilitated by the cargo receptor TMED10; it results in protein translocation from the cytoplasm into the ERGIC (endoplasmic reticulum-Golgi intermediate compartment) followed by vesicle entry and secretion.</text>
</comment>
<comment type="domain">
    <text evidence="1">The homeodomain-like HTH domain mediates nuclear localization and heterochromatin association.</text>
</comment>
<comment type="PTM">
    <text evidence="1">The full-length protein can be released from cells and is able to signal via the IL1RL1/ST2 receptor. However, proteolytic processing by CELA1, CSTG/cathepsin G and ELANE/neutrophil elastase produces C-terminal peptides that are more active than the unprocessed full-length protein. May also be proteolytically processed by calpains. Proteolytic cleavage mediated by apoptotic caspases including CASP3 and CASP7 results in IL33 inactivation. In vitro proteolytic cleavage by CASP1 was reported but could not be confirmed in vivo suggesting that IL33 is probably not a direct substrate for that caspase (By similarity).</text>
</comment>
<comment type="similarity">
    <text evidence="4">Belongs to the IL-1 family. Highly divergent.</text>
</comment>
<keyword id="KW-0158">Chromosome</keyword>
<keyword id="KW-0202">Cytokine</keyword>
<keyword id="KW-0963">Cytoplasm</keyword>
<keyword id="KW-0968">Cytoplasmic vesicle</keyword>
<keyword id="KW-0539">Nucleus</keyword>
<keyword id="KW-1185">Reference proteome</keyword>
<keyword id="KW-0964">Secreted</keyword>
<keyword id="KW-0804">Transcription</keyword>
<dbReference type="EMBL" id="CR857942">
    <property type="protein sequence ID" value="CAH90189.1"/>
    <property type="molecule type" value="mRNA"/>
</dbReference>
<dbReference type="RefSeq" id="NP_001125069.1">
    <property type="nucleotide sequence ID" value="NM_001131597.1"/>
</dbReference>
<dbReference type="RefSeq" id="XP_009242725.1">
    <property type="nucleotide sequence ID" value="XM_009244450.1"/>
</dbReference>
<dbReference type="SMR" id="Q5RDG8"/>
<dbReference type="FunCoup" id="Q5RDG8">
    <property type="interactions" value="334"/>
</dbReference>
<dbReference type="STRING" id="9601.ENSPPYP00000021536"/>
<dbReference type="Ensembl" id="ENSPPYT00000022416.3">
    <property type="protein sequence ID" value="ENSPPYP00000021536.2"/>
    <property type="gene ID" value="ENSPPYG00000019231.3"/>
</dbReference>
<dbReference type="GeneID" id="100171950"/>
<dbReference type="KEGG" id="pon:100171950"/>
<dbReference type="CTD" id="90865"/>
<dbReference type="eggNOG" id="ENOG502RW83">
    <property type="taxonomic scope" value="Eukaryota"/>
</dbReference>
<dbReference type="GeneTree" id="ENSGT00390000005185"/>
<dbReference type="HOGENOM" id="CLU_092450_0_0_1"/>
<dbReference type="InParanoid" id="Q5RDG8"/>
<dbReference type="OMA" id="KTACYFR"/>
<dbReference type="OrthoDB" id="9836513at2759"/>
<dbReference type="TreeFam" id="TF338120"/>
<dbReference type="Proteomes" id="UP000001595">
    <property type="component" value="Chromosome 9"/>
</dbReference>
<dbReference type="GO" id="GO:0005694">
    <property type="term" value="C:chromosome"/>
    <property type="evidence" value="ECO:0007669"/>
    <property type="project" value="UniProtKB-SubCell"/>
</dbReference>
<dbReference type="GO" id="GO:0005615">
    <property type="term" value="C:extracellular space"/>
    <property type="evidence" value="ECO:0007669"/>
    <property type="project" value="UniProtKB-KW"/>
</dbReference>
<dbReference type="GO" id="GO:0005654">
    <property type="term" value="C:nucleoplasm"/>
    <property type="evidence" value="ECO:0007669"/>
    <property type="project" value="Ensembl"/>
</dbReference>
<dbReference type="GO" id="GO:0030133">
    <property type="term" value="C:transport vesicle"/>
    <property type="evidence" value="ECO:0007669"/>
    <property type="project" value="UniProtKB-SubCell"/>
</dbReference>
<dbReference type="GO" id="GO:0005125">
    <property type="term" value="F:cytokine activity"/>
    <property type="evidence" value="ECO:0007669"/>
    <property type="project" value="UniProtKB-KW"/>
</dbReference>
<dbReference type="GO" id="GO:0002112">
    <property type="term" value="F:interleukin-33 receptor binding"/>
    <property type="evidence" value="ECO:0007669"/>
    <property type="project" value="Ensembl"/>
</dbReference>
<dbReference type="GO" id="GO:0140367">
    <property type="term" value="P:antibacterial innate immune response"/>
    <property type="evidence" value="ECO:0007669"/>
    <property type="project" value="Ensembl"/>
</dbReference>
<dbReference type="GO" id="GO:0051607">
    <property type="term" value="P:defense response to virus"/>
    <property type="evidence" value="ECO:0007669"/>
    <property type="project" value="Ensembl"/>
</dbReference>
<dbReference type="GO" id="GO:0097191">
    <property type="term" value="P:extrinsic apoptotic signaling pathway"/>
    <property type="evidence" value="ECO:0007669"/>
    <property type="project" value="Ensembl"/>
</dbReference>
<dbReference type="GO" id="GO:0010467">
    <property type="term" value="P:gene expression"/>
    <property type="evidence" value="ECO:0007669"/>
    <property type="project" value="Ensembl"/>
</dbReference>
<dbReference type="GO" id="GO:0038172">
    <property type="term" value="P:interleukin-33-mediated signaling pathway"/>
    <property type="evidence" value="ECO:0007669"/>
    <property type="project" value="Ensembl"/>
</dbReference>
<dbReference type="GO" id="GO:0030225">
    <property type="term" value="P:macrophage differentiation"/>
    <property type="evidence" value="ECO:0000250"/>
    <property type="project" value="UniProtKB"/>
</dbReference>
<dbReference type="GO" id="GO:0002282">
    <property type="term" value="P:microglial cell activation involved in immune response"/>
    <property type="evidence" value="ECO:0007669"/>
    <property type="project" value="Ensembl"/>
</dbReference>
<dbReference type="GO" id="GO:0061518">
    <property type="term" value="P:microglial cell proliferation"/>
    <property type="evidence" value="ECO:0007669"/>
    <property type="project" value="Ensembl"/>
</dbReference>
<dbReference type="GO" id="GO:0002638">
    <property type="term" value="P:negative regulation of immunoglobulin production"/>
    <property type="evidence" value="ECO:0007669"/>
    <property type="project" value="Ensembl"/>
</dbReference>
<dbReference type="GO" id="GO:0106015">
    <property type="term" value="P:negative regulation of inflammatory response to wounding"/>
    <property type="evidence" value="ECO:0007669"/>
    <property type="project" value="Ensembl"/>
</dbReference>
<dbReference type="GO" id="GO:0002686">
    <property type="term" value="P:negative regulation of leukocyte migration"/>
    <property type="evidence" value="ECO:0007669"/>
    <property type="project" value="Ensembl"/>
</dbReference>
<dbReference type="GO" id="GO:0120042">
    <property type="term" value="P:negative regulation of macrophage proliferation"/>
    <property type="evidence" value="ECO:0007669"/>
    <property type="project" value="Ensembl"/>
</dbReference>
<dbReference type="GO" id="GO:0002826">
    <property type="term" value="P:negative regulation of T-helper 1 type immune response"/>
    <property type="evidence" value="ECO:0007669"/>
    <property type="project" value="Ensembl"/>
</dbReference>
<dbReference type="GO" id="GO:0000122">
    <property type="term" value="P:negative regulation of transcription by RNA polymerase II"/>
    <property type="evidence" value="ECO:0007669"/>
    <property type="project" value="Ensembl"/>
</dbReference>
<dbReference type="GO" id="GO:0032689">
    <property type="term" value="P:negative regulation of type II interferon production"/>
    <property type="evidence" value="ECO:0007669"/>
    <property type="project" value="Ensembl"/>
</dbReference>
<dbReference type="GO" id="GO:0010186">
    <property type="term" value="P:positive regulation of cellular defense response"/>
    <property type="evidence" value="ECO:0007669"/>
    <property type="project" value="Ensembl"/>
</dbReference>
<dbReference type="GO" id="GO:0032722">
    <property type="term" value="P:positive regulation of chemokine production"/>
    <property type="evidence" value="ECO:0007669"/>
    <property type="project" value="Ensembl"/>
</dbReference>
<dbReference type="GO" id="GO:0002639">
    <property type="term" value="P:positive regulation of immunoglobulin production"/>
    <property type="evidence" value="ECO:0007669"/>
    <property type="project" value="Ensembl"/>
</dbReference>
<dbReference type="GO" id="GO:0050729">
    <property type="term" value="P:positive regulation of inflammatory response"/>
    <property type="evidence" value="ECO:0007669"/>
    <property type="project" value="Ensembl"/>
</dbReference>
<dbReference type="GO" id="GO:0032736">
    <property type="term" value="P:positive regulation of interleukin-13 production"/>
    <property type="evidence" value="ECO:0007669"/>
    <property type="project" value="Ensembl"/>
</dbReference>
<dbReference type="GO" id="GO:0032753">
    <property type="term" value="P:positive regulation of interleukin-4 production"/>
    <property type="evidence" value="ECO:0007669"/>
    <property type="project" value="Ensembl"/>
</dbReference>
<dbReference type="GO" id="GO:0032754">
    <property type="term" value="P:positive regulation of interleukin-5 production"/>
    <property type="evidence" value="ECO:0007669"/>
    <property type="project" value="Ensembl"/>
</dbReference>
<dbReference type="GO" id="GO:0032755">
    <property type="term" value="P:positive regulation of interleukin-6 production"/>
    <property type="evidence" value="ECO:0007669"/>
    <property type="project" value="Ensembl"/>
</dbReference>
<dbReference type="GO" id="GO:0043032">
    <property type="term" value="P:positive regulation of macrophage activation"/>
    <property type="evidence" value="ECO:0007669"/>
    <property type="project" value="Ensembl"/>
</dbReference>
<dbReference type="GO" id="GO:0045345">
    <property type="term" value="P:positive regulation of MHC class I biosynthetic process"/>
    <property type="evidence" value="ECO:0007669"/>
    <property type="project" value="Ensembl"/>
</dbReference>
<dbReference type="GO" id="GO:0045348">
    <property type="term" value="P:positive regulation of MHC class II biosynthetic process"/>
    <property type="evidence" value="ECO:0007669"/>
    <property type="project" value="Ensembl"/>
</dbReference>
<dbReference type="GO" id="GO:0032436">
    <property type="term" value="P:positive regulation of proteasomal ubiquitin-dependent protein catabolic process"/>
    <property type="evidence" value="ECO:0007669"/>
    <property type="project" value="Ensembl"/>
</dbReference>
<dbReference type="GO" id="GO:0045944">
    <property type="term" value="P:positive regulation of transcription by RNA polymerase II"/>
    <property type="evidence" value="ECO:0007669"/>
    <property type="project" value="Ensembl"/>
</dbReference>
<dbReference type="GO" id="GO:0032760">
    <property type="term" value="P:positive regulation of tumor necrosis factor production"/>
    <property type="evidence" value="ECO:0007669"/>
    <property type="project" value="Ensembl"/>
</dbReference>
<dbReference type="GO" id="GO:0002830">
    <property type="term" value="P:positive regulation of type 2 immune response"/>
    <property type="evidence" value="ECO:0007669"/>
    <property type="project" value="Ensembl"/>
</dbReference>
<dbReference type="GO" id="GO:0006606">
    <property type="term" value="P:protein import into nucleus"/>
    <property type="evidence" value="ECO:0007669"/>
    <property type="project" value="Ensembl"/>
</dbReference>
<dbReference type="GO" id="GO:0009611">
    <property type="term" value="P:response to wounding"/>
    <property type="evidence" value="ECO:0007669"/>
    <property type="project" value="Ensembl"/>
</dbReference>
<dbReference type="GO" id="GO:0042092">
    <property type="term" value="P:type 2 immune response"/>
    <property type="evidence" value="ECO:0007669"/>
    <property type="project" value="Ensembl"/>
</dbReference>
<dbReference type="CDD" id="cd23299">
    <property type="entry name" value="beta-trefoil_IL33"/>
    <property type="match status" value="1"/>
</dbReference>
<dbReference type="FunFam" id="2.80.10.50:FF:000052">
    <property type="entry name" value="Interleukin 33"/>
    <property type="match status" value="1"/>
</dbReference>
<dbReference type="Gene3D" id="2.80.10.50">
    <property type="match status" value="1"/>
</dbReference>
<dbReference type="InterPro" id="IPR026145">
    <property type="entry name" value="IL-33"/>
</dbReference>
<dbReference type="InterPro" id="IPR053902">
    <property type="entry name" value="IL33_C"/>
</dbReference>
<dbReference type="PANTHER" id="PTHR21114">
    <property type="entry name" value="DVS27 PROTEIN"/>
    <property type="match status" value="1"/>
</dbReference>
<dbReference type="PANTHER" id="PTHR21114:SF0">
    <property type="entry name" value="INTERLEUKIN-33"/>
    <property type="match status" value="1"/>
</dbReference>
<dbReference type="Pfam" id="PF15095">
    <property type="entry name" value="IL33_bt"/>
    <property type="match status" value="1"/>
</dbReference>